<feature type="chain" id="PRO_0000195103" description="Aspartate/glutamate leucyltransferase">
    <location>
        <begin position="1"/>
        <end position="242"/>
    </location>
</feature>
<comment type="function">
    <text evidence="1">Functions in the N-end rule pathway of protein degradation where it conjugates Leu from its aminoacyl-tRNA to the N-termini of proteins containing an N-terminal aspartate or glutamate.</text>
</comment>
<comment type="catalytic activity">
    <reaction evidence="1">
        <text>N-terminal L-glutamyl-[protein] + L-leucyl-tRNA(Leu) = N-terminal L-leucyl-L-glutamyl-[protein] + tRNA(Leu) + H(+)</text>
        <dbReference type="Rhea" id="RHEA:50412"/>
        <dbReference type="Rhea" id="RHEA-COMP:9613"/>
        <dbReference type="Rhea" id="RHEA-COMP:9622"/>
        <dbReference type="Rhea" id="RHEA-COMP:12664"/>
        <dbReference type="Rhea" id="RHEA-COMP:12668"/>
        <dbReference type="ChEBI" id="CHEBI:15378"/>
        <dbReference type="ChEBI" id="CHEBI:64721"/>
        <dbReference type="ChEBI" id="CHEBI:78442"/>
        <dbReference type="ChEBI" id="CHEBI:78494"/>
        <dbReference type="ChEBI" id="CHEBI:133041"/>
        <dbReference type="EC" id="2.3.2.29"/>
    </reaction>
</comment>
<comment type="catalytic activity">
    <reaction evidence="1">
        <text>N-terminal L-aspartyl-[protein] + L-leucyl-tRNA(Leu) = N-terminal L-leucyl-L-aspartyl-[protein] + tRNA(Leu) + H(+)</text>
        <dbReference type="Rhea" id="RHEA:50420"/>
        <dbReference type="Rhea" id="RHEA-COMP:9613"/>
        <dbReference type="Rhea" id="RHEA-COMP:9622"/>
        <dbReference type="Rhea" id="RHEA-COMP:12669"/>
        <dbReference type="Rhea" id="RHEA-COMP:12674"/>
        <dbReference type="ChEBI" id="CHEBI:15378"/>
        <dbReference type="ChEBI" id="CHEBI:64720"/>
        <dbReference type="ChEBI" id="CHEBI:78442"/>
        <dbReference type="ChEBI" id="CHEBI:78494"/>
        <dbReference type="ChEBI" id="CHEBI:133042"/>
        <dbReference type="EC" id="2.3.2.29"/>
    </reaction>
</comment>
<comment type="subcellular location">
    <subcellularLocation>
        <location evidence="1">Cytoplasm</location>
    </subcellularLocation>
</comment>
<comment type="similarity">
    <text evidence="1">Belongs to the R-transferase family. Bpt subfamily.</text>
</comment>
<name>BPT_CHRVO</name>
<reference key="1">
    <citation type="journal article" date="2003" name="Proc. Natl. Acad. Sci. U.S.A.">
        <title>The complete genome sequence of Chromobacterium violaceum reveals remarkable and exploitable bacterial adaptability.</title>
        <authorList>
            <person name="Vasconcelos A.T.R."/>
            <person name="de Almeida D.F."/>
            <person name="Hungria M."/>
            <person name="Guimaraes C.T."/>
            <person name="Antonio R.V."/>
            <person name="Almeida F.C."/>
            <person name="de Almeida L.G.P."/>
            <person name="de Almeida R."/>
            <person name="Alves-Gomes J.A."/>
            <person name="Andrade E.M."/>
            <person name="Araripe J."/>
            <person name="de Araujo M.F.F."/>
            <person name="Astolfi-Filho S."/>
            <person name="Azevedo V."/>
            <person name="Baptista A.J."/>
            <person name="Bataus L.A.M."/>
            <person name="Batista J.S."/>
            <person name="Belo A."/>
            <person name="van den Berg C."/>
            <person name="Bogo M."/>
            <person name="Bonatto S."/>
            <person name="Bordignon J."/>
            <person name="Brigido M.M."/>
            <person name="Brito C.A."/>
            <person name="Brocchi M."/>
            <person name="Burity H.A."/>
            <person name="Camargo A.A."/>
            <person name="Cardoso D.D.P."/>
            <person name="Carneiro N.P."/>
            <person name="Carraro D.M."/>
            <person name="Carvalho C.M.B."/>
            <person name="Cascardo J.C.M."/>
            <person name="Cavada B.S."/>
            <person name="Chueire L.M.O."/>
            <person name="Creczynski-Pasa T.B."/>
            <person name="Cunha-Junior N.C."/>
            <person name="Fagundes N."/>
            <person name="Falcao C.L."/>
            <person name="Fantinatti F."/>
            <person name="Farias I.P."/>
            <person name="Felipe M.S.S."/>
            <person name="Ferrari L.P."/>
            <person name="Ferro J.A."/>
            <person name="Ferro M.I.T."/>
            <person name="Franco G.R."/>
            <person name="Freitas N.S.A."/>
            <person name="Furlan L.R."/>
            <person name="Gazzinelli R.T."/>
            <person name="Gomes E.A."/>
            <person name="Goncalves P.R."/>
            <person name="Grangeiro T.B."/>
            <person name="Grattapaglia D."/>
            <person name="Grisard E.C."/>
            <person name="Hanna E.S."/>
            <person name="Jardim S.N."/>
            <person name="Laurino J."/>
            <person name="Leoi L.C.T."/>
            <person name="Lima L.F.A."/>
            <person name="Loureiro M.F."/>
            <person name="Lyra M.C.C.P."/>
            <person name="Madeira H.M.F."/>
            <person name="Manfio G.P."/>
            <person name="Maranhao A.Q."/>
            <person name="Martins W.S."/>
            <person name="di Mauro S.M.Z."/>
            <person name="de Medeiros S.R.B."/>
            <person name="Meissner R.V."/>
            <person name="Moreira M.A.M."/>
            <person name="Nascimento F.F."/>
            <person name="Nicolas M.F."/>
            <person name="Oliveira J.G."/>
            <person name="Oliveira S.C."/>
            <person name="Paixao R.F.C."/>
            <person name="Parente J.A."/>
            <person name="Pedrosa F.O."/>
            <person name="Pena S.D.J."/>
            <person name="Pereira J.O."/>
            <person name="Pereira M."/>
            <person name="Pinto L.S.R.C."/>
            <person name="Pinto L.S."/>
            <person name="Porto J.I.R."/>
            <person name="Potrich D.P."/>
            <person name="Ramalho-Neto C.E."/>
            <person name="Reis A.M.M."/>
            <person name="Rigo L.U."/>
            <person name="Rondinelli E."/>
            <person name="Santos E.B.P."/>
            <person name="Santos F.R."/>
            <person name="Schneider M.P.C."/>
            <person name="Seuanez H.N."/>
            <person name="Silva A.M.R."/>
            <person name="da Silva A.L.C."/>
            <person name="Silva D.W."/>
            <person name="Silva R."/>
            <person name="Simoes I.C."/>
            <person name="Simon D."/>
            <person name="Soares C.M.A."/>
            <person name="Soares R.B.A."/>
            <person name="Souza E.M."/>
            <person name="Souza K.R.L."/>
            <person name="Souza R.C."/>
            <person name="Steffens M.B.R."/>
            <person name="Steindel M."/>
            <person name="Teixeira S.R."/>
            <person name="Urmenyi T."/>
            <person name="Vettore A."/>
            <person name="Wassem R."/>
            <person name="Zaha A."/>
            <person name="Simpson A.J.G."/>
        </authorList>
    </citation>
    <scope>NUCLEOTIDE SEQUENCE [LARGE SCALE GENOMIC DNA]</scope>
    <source>
        <strain>ATCC 12472 / DSM 30191 / JCM 1249 / CCUG 213 / NBRC 12614 / NCIMB 9131 / NCTC 9757 / MK</strain>
    </source>
</reference>
<sequence>MSHREAGQVAAIHFYATAPYPCSYLSGRQARSQVAIPAEAIDGGVYSQLVRLGFRRSGLYTYRPYCDSCQACIPVRLPVDQFRPNRTQRKVWRRGAGMSARWLPLAFDAEHYALYRWYQQTRHAGGGMSDDDAQQYSEFILKSGVDSHLAEFRLDGELKMVSLVDRLVDGLSAVYTFYDPEDSQSSLGVYNVLWQVEQARMLGLSYVYLGYWIADCRKMAYKSGYRPLQMLHGGRWQTMPEG</sequence>
<protein>
    <recommendedName>
        <fullName evidence="1">Aspartate/glutamate leucyltransferase</fullName>
        <ecNumber evidence="1">2.3.2.29</ecNumber>
    </recommendedName>
</protein>
<dbReference type="EC" id="2.3.2.29" evidence="1"/>
<dbReference type="EMBL" id="AE016825">
    <property type="protein sequence ID" value="AAQ59473.1"/>
    <property type="molecule type" value="Genomic_DNA"/>
</dbReference>
<dbReference type="RefSeq" id="WP_011135351.1">
    <property type="nucleotide sequence ID" value="NC_005085.1"/>
</dbReference>
<dbReference type="SMR" id="Q7NX30"/>
<dbReference type="STRING" id="243365.CV_1799"/>
<dbReference type="GeneID" id="66367472"/>
<dbReference type="KEGG" id="cvi:CV_1799"/>
<dbReference type="eggNOG" id="COG2935">
    <property type="taxonomic scope" value="Bacteria"/>
</dbReference>
<dbReference type="HOGENOM" id="CLU_077607_0_0_4"/>
<dbReference type="OrthoDB" id="9782022at2"/>
<dbReference type="Proteomes" id="UP000001424">
    <property type="component" value="Chromosome"/>
</dbReference>
<dbReference type="GO" id="GO:0005737">
    <property type="term" value="C:cytoplasm"/>
    <property type="evidence" value="ECO:0007669"/>
    <property type="project" value="UniProtKB-SubCell"/>
</dbReference>
<dbReference type="GO" id="GO:0004057">
    <property type="term" value="F:arginyl-tRNA--protein transferase activity"/>
    <property type="evidence" value="ECO:0007669"/>
    <property type="project" value="InterPro"/>
</dbReference>
<dbReference type="GO" id="GO:0008914">
    <property type="term" value="F:leucyl-tRNA--protein transferase activity"/>
    <property type="evidence" value="ECO:0007669"/>
    <property type="project" value="UniProtKB-UniRule"/>
</dbReference>
<dbReference type="GO" id="GO:0071596">
    <property type="term" value="P:ubiquitin-dependent protein catabolic process via the N-end rule pathway"/>
    <property type="evidence" value="ECO:0007669"/>
    <property type="project" value="InterPro"/>
</dbReference>
<dbReference type="HAMAP" id="MF_00689">
    <property type="entry name" value="Bpt"/>
    <property type="match status" value="1"/>
</dbReference>
<dbReference type="InterPro" id="IPR016181">
    <property type="entry name" value="Acyl_CoA_acyltransferase"/>
</dbReference>
<dbReference type="InterPro" id="IPR017138">
    <property type="entry name" value="Asp_Glu_LeuTrfase"/>
</dbReference>
<dbReference type="InterPro" id="IPR030700">
    <property type="entry name" value="N-end_Aminoacyl_Trfase"/>
</dbReference>
<dbReference type="InterPro" id="IPR007472">
    <property type="entry name" value="N-end_Aminoacyl_Trfase_C"/>
</dbReference>
<dbReference type="InterPro" id="IPR007471">
    <property type="entry name" value="N-end_Aminoacyl_Trfase_N"/>
</dbReference>
<dbReference type="NCBIfam" id="NF002341">
    <property type="entry name" value="PRK01305.1-1"/>
    <property type="match status" value="1"/>
</dbReference>
<dbReference type="NCBIfam" id="NF002342">
    <property type="entry name" value="PRK01305.1-3"/>
    <property type="match status" value="1"/>
</dbReference>
<dbReference type="NCBIfam" id="NF002346">
    <property type="entry name" value="PRK01305.2-3"/>
    <property type="match status" value="1"/>
</dbReference>
<dbReference type="PANTHER" id="PTHR21367">
    <property type="entry name" value="ARGININE-TRNA-PROTEIN TRANSFERASE 1"/>
    <property type="match status" value="1"/>
</dbReference>
<dbReference type="PANTHER" id="PTHR21367:SF1">
    <property type="entry name" value="ARGINYL-TRNA--PROTEIN TRANSFERASE 1"/>
    <property type="match status" value="1"/>
</dbReference>
<dbReference type="Pfam" id="PF04377">
    <property type="entry name" value="ATE_C"/>
    <property type="match status" value="1"/>
</dbReference>
<dbReference type="Pfam" id="PF04376">
    <property type="entry name" value="ATE_N"/>
    <property type="match status" value="1"/>
</dbReference>
<dbReference type="PIRSF" id="PIRSF037208">
    <property type="entry name" value="ATE_pro_prd"/>
    <property type="match status" value="1"/>
</dbReference>
<dbReference type="SUPFAM" id="SSF55729">
    <property type="entry name" value="Acyl-CoA N-acyltransferases (Nat)"/>
    <property type="match status" value="1"/>
</dbReference>
<keyword id="KW-0012">Acyltransferase</keyword>
<keyword id="KW-0963">Cytoplasm</keyword>
<keyword id="KW-1185">Reference proteome</keyword>
<keyword id="KW-0808">Transferase</keyword>
<organism>
    <name type="scientific">Chromobacterium violaceum (strain ATCC 12472 / DSM 30191 / JCM 1249 / CCUG 213 / NBRC 12614 / NCIMB 9131 / NCTC 9757 / MK)</name>
    <dbReference type="NCBI Taxonomy" id="243365"/>
    <lineage>
        <taxon>Bacteria</taxon>
        <taxon>Pseudomonadati</taxon>
        <taxon>Pseudomonadota</taxon>
        <taxon>Betaproteobacteria</taxon>
        <taxon>Neisseriales</taxon>
        <taxon>Chromobacteriaceae</taxon>
        <taxon>Chromobacterium</taxon>
    </lineage>
</organism>
<accession>Q7NX30</accession>
<proteinExistence type="inferred from homology"/>
<evidence type="ECO:0000255" key="1">
    <source>
        <dbReference type="HAMAP-Rule" id="MF_00689"/>
    </source>
</evidence>
<gene>
    <name evidence="1" type="primary">bpt</name>
    <name type="ordered locus">CV_1799</name>
</gene>